<accession>C4ZZV9</accession>
<proteinExistence type="inferred from homology"/>
<sequence length="140" mass="15473">MLKTISPLISPELLKVLAEMGHGDEIIFSDAHFPAHSMGPQVIRADGLLVSDLLQAIIPLFELDSYAPPLVMMAAVEGDTLDPEVERRYRNALSLQAPCPDIIRINRFAFYERAQKAFAIVITGERAKYGNILLKKGVTP</sequence>
<gene>
    <name evidence="1" type="primary">fucU</name>
    <name type="ordered locus">BWG_2542</name>
</gene>
<protein>
    <recommendedName>
        <fullName evidence="1">L-fucose mutarotase</fullName>
        <ecNumber evidence="1">5.1.3.29</ecNumber>
    </recommendedName>
    <alternativeName>
        <fullName evidence="1">Fucose 1-epimerase</fullName>
    </alternativeName>
    <alternativeName>
        <fullName evidence="1">Type-2 mutarotase</fullName>
    </alternativeName>
</protein>
<evidence type="ECO:0000255" key="1">
    <source>
        <dbReference type="HAMAP-Rule" id="MF_01662"/>
    </source>
</evidence>
<comment type="function">
    <text evidence="1">Involved in the anomeric conversion of L-fucose.</text>
</comment>
<comment type="catalytic activity">
    <reaction evidence="1">
        <text>alpha-L-fucose = beta-L-fucose</text>
        <dbReference type="Rhea" id="RHEA:25580"/>
        <dbReference type="ChEBI" id="CHEBI:42548"/>
        <dbReference type="ChEBI" id="CHEBI:42589"/>
        <dbReference type="EC" id="5.1.3.29"/>
    </reaction>
</comment>
<comment type="pathway">
    <text evidence="1">Carbohydrate metabolism; L-fucose metabolism.</text>
</comment>
<comment type="subunit">
    <text evidence="1">Homodecamer.</text>
</comment>
<comment type="subcellular location">
    <subcellularLocation>
        <location evidence="1">Cytoplasm</location>
    </subcellularLocation>
</comment>
<comment type="similarity">
    <text evidence="1">Belongs to the RbsD / FucU family. FucU mutarotase subfamily.</text>
</comment>
<keyword id="KW-0119">Carbohydrate metabolism</keyword>
<keyword id="KW-0963">Cytoplasm</keyword>
<keyword id="KW-0294">Fucose metabolism</keyword>
<keyword id="KW-0413">Isomerase</keyword>
<feature type="chain" id="PRO_1000215871" description="L-fucose mutarotase">
    <location>
        <begin position="1"/>
        <end position="140"/>
    </location>
</feature>
<feature type="active site" description="Proton donor" evidence="1">
    <location>
        <position position="22"/>
    </location>
</feature>
<feature type="binding site" evidence="1">
    <location>
        <position position="30"/>
    </location>
    <ligand>
        <name>substrate</name>
    </ligand>
</feature>
<feature type="binding site" evidence="1">
    <location>
        <position position="107"/>
    </location>
    <ligand>
        <name>substrate</name>
    </ligand>
</feature>
<feature type="binding site" evidence="1">
    <location>
        <begin position="129"/>
        <end position="131"/>
    </location>
    <ligand>
        <name>substrate</name>
    </ligand>
</feature>
<reference key="1">
    <citation type="journal article" date="2009" name="J. Bacteriol.">
        <title>Genomic sequencing reveals regulatory mutations and recombinational events in the widely used MC4100 lineage of Escherichia coli K-12.</title>
        <authorList>
            <person name="Ferenci T."/>
            <person name="Zhou Z."/>
            <person name="Betteridge T."/>
            <person name="Ren Y."/>
            <person name="Liu Y."/>
            <person name="Feng L."/>
            <person name="Reeves P.R."/>
            <person name="Wang L."/>
        </authorList>
    </citation>
    <scope>NUCLEOTIDE SEQUENCE [LARGE SCALE GENOMIC DNA]</scope>
    <source>
        <strain>K12 / MC4100 / BW2952</strain>
    </source>
</reference>
<dbReference type="EC" id="5.1.3.29" evidence="1"/>
<dbReference type="EMBL" id="CP001396">
    <property type="protein sequence ID" value="ACR63646.1"/>
    <property type="molecule type" value="Genomic_DNA"/>
</dbReference>
<dbReference type="RefSeq" id="WP_000920840.1">
    <property type="nucleotide sequence ID" value="NC_012759.1"/>
</dbReference>
<dbReference type="SMR" id="C4ZZV9"/>
<dbReference type="GeneID" id="93779194"/>
<dbReference type="KEGG" id="ebw:BWG_2542"/>
<dbReference type="HOGENOM" id="CLU_120075_1_0_6"/>
<dbReference type="UniPathway" id="UPA00956"/>
<dbReference type="GO" id="GO:0005737">
    <property type="term" value="C:cytoplasm"/>
    <property type="evidence" value="ECO:0007669"/>
    <property type="project" value="UniProtKB-SubCell"/>
</dbReference>
<dbReference type="GO" id="GO:0042806">
    <property type="term" value="F:fucose binding"/>
    <property type="evidence" value="ECO:0007669"/>
    <property type="project" value="InterPro"/>
</dbReference>
<dbReference type="GO" id="GO:0036373">
    <property type="term" value="F:L-fucose mutarotase activity"/>
    <property type="evidence" value="ECO:0007669"/>
    <property type="project" value="UniProtKB-EC"/>
</dbReference>
<dbReference type="GO" id="GO:0036065">
    <property type="term" value="P:fucosylation"/>
    <property type="evidence" value="ECO:0007669"/>
    <property type="project" value="TreeGrafter"/>
</dbReference>
<dbReference type="GO" id="GO:0042354">
    <property type="term" value="P:L-fucose metabolic process"/>
    <property type="evidence" value="ECO:0007669"/>
    <property type="project" value="UniProtKB-UniRule"/>
</dbReference>
<dbReference type="FunFam" id="3.40.1650.10:FF:000001">
    <property type="entry name" value="L-fucose mutarotase"/>
    <property type="match status" value="1"/>
</dbReference>
<dbReference type="Gene3D" id="3.40.1650.10">
    <property type="entry name" value="RbsD-like domain"/>
    <property type="match status" value="1"/>
</dbReference>
<dbReference type="HAMAP" id="MF_01662">
    <property type="entry name" value="L_fucose_rotase"/>
    <property type="match status" value="1"/>
</dbReference>
<dbReference type="InterPro" id="IPR023751">
    <property type="entry name" value="L-fucose_mutarotase"/>
</dbReference>
<dbReference type="InterPro" id="IPR023750">
    <property type="entry name" value="RbsD-like_sf"/>
</dbReference>
<dbReference type="InterPro" id="IPR050443">
    <property type="entry name" value="RbsD/FucU_mutarotase"/>
</dbReference>
<dbReference type="InterPro" id="IPR007721">
    <property type="entry name" value="RbsD_FucU"/>
</dbReference>
<dbReference type="NCBIfam" id="NF011949">
    <property type="entry name" value="PRK15420.1"/>
    <property type="match status" value="1"/>
</dbReference>
<dbReference type="PANTHER" id="PTHR31690">
    <property type="entry name" value="FUCOSE MUTAROTASE"/>
    <property type="match status" value="1"/>
</dbReference>
<dbReference type="PANTHER" id="PTHR31690:SF4">
    <property type="entry name" value="FUCOSE MUTAROTASE"/>
    <property type="match status" value="1"/>
</dbReference>
<dbReference type="Pfam" id="PF05025">
    <property type="entry name" value="RbsD_FucU"/>
    <property type="match status" value="1"/>
</dbReference>
<dbReference type="SUPFAM" id="SSF102546">
    <property type="entry name" value="RbsD-like"/>
    <property type="match status" value="1"/>
</dbReference>
<organism>
    <name type="scientific">Escherichia coli (strain K12 / MC4100 / BW2952)</name>
    <dbReference type="NCBI Taxonomy" id="595496"/>
    <lineage>
        <taxon>Bacteria</taxon>
        <taxon>Pseudomonadati</taxon>
        <taxon>Pseudomonadota</taxon>
        <taxon>Gammaproteobacteria</taxon>
        <taxon>Enterobacterales</taxon>
        <taxon>Enterobacteriaceae</taxon>
        <taxon>Escherichia</taxon>
    </lineage>
</organism>
<name>FUCM_ECOBW</name>